<protein>
    <recommendedName>
        <fullName evidence="1">RNA polymerase-associated protein RapA</fullName>
        <ecNumber evidence="1">3.6.4.-</ecNumber>
    </recommendedName>
    <alternativeName>
        <fullName evidence="1">ATP-dependent helicase HepA</fullName>
    </alternativeName>
</protein>
<accession>Q1CMQ6</accession>
<accession>C4GNU4</accession>
<name>RAPA_YERPN</name>
<reference key="1">
    <citation type="journal article" date="2006" name="J. Bacteriol.">
        <title>Complete genome sequence of Yersinia pestis strains Antiqua and Nepal516: evidence of gene reduction in an emerging pathogen.</title>
        <authorList>
            <person name="Chain P.S.G."/>
            <person name="Hu P."/>
            <person name="Malfatti S.A."/>
            <person name="Radnedge L."/>
            <person name="Larimer F."/>
            <person name="Vergez L.M."/>
            <person name="Worsham P."/>
            <person name="Chu M.C."/>
            <person name="Andersen G.L."/>
        </authorList>
    </citation>
    <scope>NUCLEOTIDE SEQUENCE [LARGE SCALE GENOMIC DNA]</scope>
    <source>
        <strain>Nepal516</strain>
    </source>
</reference>
<reference key="2">
    <citation type="submission" date="2009-04" db="EMBL/GenBank/DDBJ databases">
        <title>Yersinia pestis Nepal516A whole genome shotgun sequencing project.</title>
        <authorList>
            <person name="Plunkett G. III"/>
            <person name="Anderson B.D."/>
            <person name="Baumler D.J."/>
            <person name="Burland V."/>
            <person name="Cabot E.L."/>
            <person name="Glasner J.D."/>
            <person name="Mau B."/>
            <person name="Neeno-Eckwall E."/>
            <person name="Perna N.T."/>
            <person name="Munk A.C."/>
            <person name="Tapia R."/>
            <person name="Green L.D."/>
            <person name="Rogers Y.C."/>
            <person name="Detter J.C."/>
            <person name="Bruce D.C."/>
            <person name="Brettin T.S."/>
        </authorList>
    </citation>
    <scope>NUCLEOTIDE SEQUENCE [LARGE SCALE GENOMIC DNA]</scope>
    <source>
        <strain>Nepal516</strain>
    </source>
</reference>
<keyword id="KW-0010">Activator</keyword>
<keyword id="KW-0067">ATP-binding</keyword>
<keyword id="KW-0238">DNA-binding</keyword>
<keyword id="KW-0347">Helicase</keyword>
<keyword id="KW-0378">Hydrolase</keyword>
<keyword id="KW-0547">Nucleotide-binding</keyword>
<keyword id="KW-0804">Transcription</keyword>
<keyword id="KW-0805">Transcription regulation</keyword>
<organism>
    <name type="scientific">Yersinia pestis bv. Antiqua (strain Nepal516)</name>
    <dbReference type="NCBI Taxonomy" id="377628"/>
    <lineage>
        <taxon>Bacteria</taxon>
        <taxon>Pseudomonadati</taxon>
        <taxon>Pseudomonadota</taxon>
        <taxon>Gammaproteobacteria</taxon>
        <taxon>Enterobacterales</taxon>
        <taxon>Yersiniaceae</taxon>
        <taxon>Yersinia</taxon>
    </lineage>
</organism>
<evidence type="ECO:0000255" key="1">
    <source>
        <dbReference type="HAMAP-Rule" id="MF_01821"/>
    </source>
</evidence>
<sequence>MPFTLGQRWISDTESELGLGTVVAIDVRMITLLFPATGENRLYARNDSPITRVMFNPSDTITHHEGWQLKVEEVTQENGLITYIGTRLDTEETGVAMREVLLDSKLTFSKPQDRLFAGQIDRMDRFALRFRARKYQSEQFRLPWSGLRGIRASLIPHQLHIAYEVGQRHAPRVLLADEVGLGKTIEAGMIIHQQLLAGRAERVLIVVPESLQHQWLVEMLRRFNLRFSLFDDSRYSEALLDSSNPFDTEQMVICSLDFVRRNKQRLEQLADASWDLLVVDEAHHMAWSEEAPSREYQVIEQLAEHIPGVLLLTATPEQLGQQSHFARLRLLDPDRFHDYEEFVNEQQKYRPIADAVTLLLGGERLTDDKLNLLGELIDEQDIEPLLKAANSQSEDSEAARQELVTMLMDRHGTSRVLFRNTRNGVKGFPHRVLHQIKLPLPTQYQTAIKVSGIMGAKKTLDARAKDMLYPEQIYQEFEGENATWWNFDPRVEWLLNYLVANRGEKVLVICAQAATALQLEQVLREREAIRAAVFHEGLSLIERDRAAAYFASEEDGAQVLLCSEIGSEGRNFQFACQLVMFDLPFNPDLLEQRIGRLDRIGQNREIQIMVPYLEDTAQAILVRWYHEGLDAFEHTCPTGRTIYDSSYQELISYLATPSEQEGLDEFIHTCRQQHEGLKLQLEQGRDRLLEMHSNGGEHGQELAQSIAEQDNDINLVSFALNLFDIVGINQEDRSDNLIVLTPSDHMLVPDFPGLPPDGCTVTFDREQALSREDAQFVSWEHPIIRNGLDLILSGDTGSCAVSLLKNKALPVGTLLAELVYVVEAQAPKHLQLTRFLPPTPVRMLMDRNGTNLAAQVEFESFNRQLNAVNRHTSSKLVNAVQQEVHTMLQQAEALVEAQAQALIETAKREADDKLSTELARLEALKAVNPNIRDDEIEALEHNRKMVLENLNQAGWRLDAIRLVVVTHQ</sequence>
<feature type="chain" id="PRO_1000088402" description="RNA polymerase-associated protein RapA">
    <location>
        <begin position="1"/>
        <end position="968"/>
    </location>
</feature>
<feature type="domain" description="Helicase ATP-binding" evidence="1">
    <location>
        <begin position="164"/>
        <end position="334"/>
    </location>
</feature>
<feature type="domain" description="Helicase C-terminal" evidence="1">
    <location>
        <begin position="490"/>
        <end position="644"/>
    </location>
</feature>
<feature type="short sequence motif" description="DEAH box">
    <location>
        <begin position="280"/>
        <end position="283"/>
    </location>
</feature>
<feature type="binding site" evidence="1">
    <location>
        <begin position="177"/>
        <end position="184"/>
    </location>
    <ligand>
        <name>ATP</name>
        <dbReference type="ChEBI" id="CHEBI:30616"/>
    </ligand>
</feature>
<comment type="function">
    <text evidence="1">Transcription regulator that activates transcription by stimulating RNA polymerase (RNAP) recycling in case of stress conditions such as supercoiled DNA or high salt concentrations. Probably acts by releasing the RNAP, when it is trapped or immobilized on tightly supercoiled DNA. Does not activate transcription on linear DNA. Probably not involved in DNA repair.</text>
</comment>
<comment type="subunit">
    <text evidence="1">Interacts with the RNAP. Has a higher affinity for the core RNAP than for the holoenzyme. Its ATPase activity is stimulated by binding to RNAP.</text>
</comment>
<comment type="similarity">
    <text evidence="1">Belongs to the SNF2/RAD54 helicase family. RapA subfamily.</text>
</comment>
<gene>
    <name evidence="1" type="primary">rapA</name>
    <name type="ordered locus">YPN_0392</name>
    <name type="ORF">YP516_0400</name>
</gene>
<dbReference type="EC" id="3.6.4.-" evidence="1"/>
<dbReference type="EMBL" id="CP000305">
    <property type="protein sequence ID" value="ABG16724.1"/>
    <property type="molecule type" value="Genomic_DNA"/>
</dbReference>
<dbReference type="EMBL" id="ACNQ01000006">
    <property type="protein sequence ID" value="EEO78176.1"/>
    <property type="molecule type" value="Genomic_DNA"/>
</dbReference>
<dbReference type="RefSeq" id="WP_002220588.1">
    <property type="nucleotide sequence ID" value="NZ_ACNQ01000006.1"/>
</dbReference>
<dbReference type="SMR" id="Q1CMQ6"/>
<dbReference type="GeneID" id="57974093"/>
<dbReference type="KEGG" id="ypn:YPN_0392"/>
<dbReference type="HOGENOM" id="CLU_011520_0_0_6"/>
<dbReference type="Proteomes" id="UP000008936">
    <property type="component" value="Chromosome"/>
</dbReference>
<dbReference type="GO" id="GO:0005524">
    <property type="term" value="F:ATP binding"/>
    <property type="evidence" value="ECO:0007669"/>
    <property type="project" value="UniProtKB-UniRule"/>
</dbReference>
<dbReference type="GO" id="GO:0003677">
    <property type="term" value="F:DNA binding"/>
    <property type="evidence" value="ECO:0007669"/>
    <property type="project" value="UniProtKB-KW"/>
</dbReference>
<dbReference type="GO" id="GO:0004386">
    <property type="term" value="F:helicase activity"/>
    <property type="evidence" value="ECO:0007669"/>
    <property type="project" value="UniProtKB-UniRule"/>
</dbReference>
<dbReference type="GO" id="GO:0016817">
    <property type="term" value="F:hydrolase activity, acting on acid anhydrides"/>
    <property type="evidence" value="ECO:0007669"/>
    <property type="project" value="InterPro"/>
</dbReference>
<dbReference type="GO" id="GO:0006355">
    <property type="term" value="P:regulation of DNA-templated transcription"/>
    <property type="evidence" value="ECO:0007669"/>
    <property type="project" value="UniProtKB-UniRule"/>
</dbReference>
<dbReference type="CDD" id="cd18011">
    <property type="entry name" value="DEXDc_RapA"/>
    <property type="match status" value="1"/>
</dbReference>
<dbReference type="CDD" id="cd18793">
    <property type="entry name" value="SF2_C_SNF"/>
    <property type="match status" value="1"/>
</dbReference>
<dbReference type="FunFam" id="3.40.50.10810:FF:000012">
    <property type="entry name" value="RNA polymerase-associated protein RapA"/>
    <property type="match status" value="1"/>
</dbReference>
<dbReference type="Gene3D" id="2.30.30.140">
    <property type="match status" value="1"/>
</dbReference>
<dbReference type="Gene3D" id="2.30.30.930">
    <property type="match status" value="1"/>
</dbReference>
<dbReference type="Gene3D" id="3.30.360.80">
    <property type="match status" value="1"/>
</dbReference>
<dbReference type="Gene3D" id="6.10.140.1500">
    <property type="match status" value="1"/>
</dbReference>
<dbReference type="Gene3D" id="6.10.140.2230">
    <property type="match status" value="1"/>
</dbReference>
<dbReference type="Gene3D" id="3.40.50.300">
    <property type="entry name" value="P-loop containing nucleotide triphosphate hydrolases"/>
    <property type="match status" value="1"/>
</dbReference>
<dbReference type="Gene3D" id="3.40.50.10810">
    <property type="entry name" value="Tandem AAA-ATPase domain"/>
    <property type="match status" value="1"/>
</dbReference>
<dbReference type="HAMAP" id="MF_01821">
    <property type="entry name" value="Helicase_RapA"/>
    <property type="match status" value="1"/>
</dbReference>
<dbReference type="InterPro" id="IPR014001">
    <property type="entry name" value="Helicase_ATP-bd"/>
</dbReference>
<dbReference type="InterPro" id="IPR001650">
    <property type="entry name" value="Helicase_C-like"/>
</dbReference>
<dbReference type="InterPro" id="IPR023949">
    <property type="entry name" value="Helicase_RapA"/>
</dbReference>
<dbReference type="InterPro" id="IPR027417">
    <property type="entry name" value="P-loop_NTPase"/>
</dbReference>
<dbReference type="InterPro" id="IPR022737">
    <property type="entry name" value="RapA_C"/>
</dbReference>
<dbReference type="InterPro" id="IPR038718">
    <property type="entry name" value="SNF2-like_sf"/>
</dbReference>
<dbReference type="InterPro" id="IPR049730">
    <property type="entry name" value="SNF2/RAD54-like_C"/>
</dbReference>
<dbReference type="InterPro" id="IPR000330">
    <property type="entry name" value="SNF2_N"/>
</dbReference>
<dbReference type="InterPro" id="IPR040765">
    <property type="entry name" value="Tudor_1_RapA"/>
</dbReference>
<dbReference type="InterPro" id="IPR040766">
    <property type="entry name" value="Tudor_2_RapA"/>
</dbReference>
<dbReference type="NCBIfam" id="NF003426">
    <property type="entry name" value="PRK04914.1"/>
    <property type="match status" value="1"/>
</dbReference>
<dbReference type="PANTHER" id="PTHR45766">
    <property type="entry name" value="DNA ANNEALING HELICASE AND ENDONUCLEASE ZRANB3 FAMILY MEMBER"/>
    <property type="match status" value="1"/>
</dbReference>
<dbReference type="PANTHER" id="PTHR45766:SF6">
    <property type="entry name" value="SWI_SNF-RELATED MATRIX-ASSOCIATED ACTIN-DEPENDENT REGULATOR OF CHROMATIN SUBFAMILY A-LIKE PROTEIN 1"/>
    <property type="match status" value="1"/>
</dbReference>
<dbReference type="Pfam" id="PF00271">
    <property type="entry name" value="Helicase_C"/>
    <property type="match status" value="1"/>
</dbReference>
<dbReference type="Pfam" id="PF12137">
    <property type="entry name" value="RapA_C"/>
    <property type="match status" value="1"/>
</dbReference>
<dbReference type="Pfam" id="PF00176">
    <property type="entry name" value="SNF2-rel_dom"/>
    <property type="match status" value="1"/>
</dbReference>
<dbReference type="Pfam" id="PF18339">
    <property type="entry name" value="Tudor_1_RapA"/>
    <property type="match status" value="1"/>
</dbReference>
<dbReference type="Pfam" id="PF18337">
    <property type="entry name" value="Tudor_RapA"/>
    <property type="match status" value="1"/>
</dbReference>
<dbReference type="SMART" id="SM00487">
    <property type="entry name" value="DEXDc"/>
    <property type="match status" value="1"/>
</dbReference>
<dbReference type="SMART" id="SM00490">
    <property type="entry name" value="HELICc"/>
    <property type="match status" value="1"/>
</dbReference>
<dbReference type="SUPFAM" id="SSF52540">
    <property type="entry name" value="P-loop containing nucleoside triphosphate hydrolases"/>
    <property type="match status" value="2"/>
</dbReference>
<dbReference type="PROSITE" id="PS51192">
    <property type="entry name" value="HELICASE_ATP_BIND_1"/>
    <property type="match status" value="1"/>
</dbReference>
<dbReference type="PROSITE" id="PS51194">
    <property type="entry name" value="HELICASE_CTER"/>
    <property type="match status" value="1"/>
</dbReference>
<proteinExistence type="inferred from homology"/>